<gene>
    <name type="primary">fgf23</name>
    <name type="ORF">GSTENG00021542001</name>
</gene>
<dbReference type="EMBL" id="AY753223">
    <property type="protein sequence ID" value="AAV97593.1"/>
    <property type="molecule type" value="mRNA"/>
</dbReference>
<dbReference type="EMBL" id="CAAE01014691">
    <property type="protein sequence ID" value="CAG02425.1"/>
    <property type="molecule type" value="Genomic_DNA"/>
</dbReference>
<dbReference type="SMR" id="Q5MK86"/>
<dbReference type="STRING" id="99883.ENSTNIP00000014355"/>
<dbReference type="GlyCosmos" id="Q5MK86">
    <property type="glycosylation" value="2 sites, No reported glycans"/>
</dbReference>
<dbReference type="Ensembl" id="ENSTNIT00000014553.1">
    <property type="protein sequence ID" value="ENSTNIP00000014355.1"/>
    <property type="gene ID" value="ENSTNIG00000011410.1"/>
</dbReference>
<dbReference type="KEGG" id="tng:GSTEN00021542G001"/>
<dbReference type="GeneTree" id="ENSGT00940000160821"/>
<dbReference type="HOGENOM" id="CLU_094251_3_0_1"/>
<dbReference type="InParanoid" id="Q5MK86"/>
<dbReference type="OMA" id="PSTHDPW"/>
<dbReference type="OrthoDB" id="8909943at2759"/>
<dbReference type="TreeFam" id="TF335872"/>
<dbReference type="Proteomes" id="UP000007303">
    <property type="component" value="Unassembled WGS sequence"/>
</dbReference>
<dbReference type="GO" id="GO:0005576">
    <property type="term" value="C:extracellular region"/>
    <property type="evidence" value="ECO:0007669"/>
    <property type="project" value="UniProtKB-SubCell"/>
</dbReference>
<dbReference type="GO" id="GO:0008083">
    <property type="term" value="F:growth factor activity"/>
    <property type="evidence" value="ECO:0007669"/>
    <property type="project" value="UniProtKB-KW"/>
</dbReference>
<dbReference type="CDD" id="cd23333">
    <property type="entry name" value="beta-trefoil_FGF23"/>
    <property type="match status" value="1"/>
</dbReference>
<dbReference type="Gene3D" id="2.80.10.50">
    <property type="match status" value="1"/>
</dbReference>
<dbReference type="InterPro" id="IPR002209">
    <property type="entry name" value="Fibroblast_GF_fam"/>
</dbReference>
<dbReference type="InterPro" id="IPR008996">
    <property type="entry name" value="IL1/FGF"/>
</dbReference>
<dbReference type="PANTHER" id="PTHR11486">
    <property type="entry name" value="FIBROBLAST GROWTH FACTOR"/>
    <property type="match status" value="1"/>
</dbReference>
<dbReference type="Pfam" id="PF00167">
    <property type="entry name" value="FGF"/>
    <property type="match status" value="1"/>
</dbReference>
<dbReference type="SMART" id="SM00442">
    <property type="entry name" value="FGF"/>
    <property type="match status" value="1"/>
</dbReference>
<dbReference type="SUPFAM" id="SSF50353">
    <property type="entry name" value="Cytokine"/>
    <property type="match status" value="1"/>
</dbReference>
<accession>Q5MK86</accession>
<keyword id="KW-1015">Disulfide bond</keyword>
<keyword id="KW-0325">Glycoprotein</keyword>
<keyword id="KW-0339">Growth factor</keyword>
<keyword id="KW-1185">Reference proteome</keyword>
<keyword id="KW-0964">Secreted</keyword>
<keyword id="KW-0732">Signal</keyword>
<reference key="1">
    <citation type="journal article" date="2005" name="Hum. Mol. Genet.">
        <title>An FGF23 missense mutation causes familial tumoral calcinosis with hyperphosphatemia.</title>
        <authorList>
            <person name="Benet-Pages A."/>
            <person name="Orlik P."/>
            <person name="Strom T.M."/>
            <person name="Lorenz-Depiereux B."/>
        </authorList>
    </citation>
    <scope>NUCLEOTIDE SEQUENCE [MRNA]</scope>
    <source>
        <tissue>Head</tissue>
    </source>
</reference>
<reference key="2">
    <citation type="journal article" date="2004" name="Nature">
        <title>Genome duplication in the teleost fish Tetraodon nigroviridis reveals the early vertebrate proto-karyotype.</title>
        <authorList>
            <person name="Jaillon O."/>
            <person name="Aury J.-M."/>
            <person name="Brunet F."/>
            <person name="Petit J.-L."/>
            <person name="Stange-Thomann N."/>
            <person name="Mauceli E."/>
            <person name="Bouneau L."/>
            <person name="Fischer C."/>
            <person name="Ozouf-Costaz C."/>
            <person name="Bernot A."/>
            <person name="Nicaud S."/>
            <person name="Jaffe D."/>
            <person name="Fisher S."/>
            <person name="Lutfalla G."/>
            <person name="Dossat C."/>
            <person name="Segurens B."/>
            <person name="Dasilva C."/>
            <person name="Salanoubat M."/>
            <person name="Levy M."/>
            <person name="Boudet N."/>
            <person name="Castellano S."/>
            <person name="Anthouard V."/>
            <person name="Jubin C."/>
            <person name="Castelli V."/>
            <person name="Katinka M."/>
            <person name="Vacherie B."/>
            <person name="Biemont C."/>
            <person name="Skalli Z."/>
            <person name="Cattolico L."/>
            <person name="Poulain J."/>
            <person name="De Berardinis V."/>
            <person name="Cruaud C."/>
            <person name="Duprat S."/>
            <person name="Brottier P."/>
            <person name="Coutanceau J.-P."/>
            <person name="Gouzy J."/>
            <person name="Parra G."/>
            <person name="Lardier G."/>
            <person name="Chapple C."/>
            <person name="McKernan K.J."/>
            <person name="McEwan P."/>
            <person name="Bosak S."/>
            <person name="Kellis M."/>
            <person name="Volff J.-N."/>
            <person name="Guigo R."/>
            <person name="Zody M.C."/>
            <person name="Mesirov J."/>
            <person name="Lindblad-Toh K."/>
            <person name="Birren B."/>
            <person name="Nusbaum C."/>
            <person name="Kahn D."/>
            <person name="Robinson-Rechavi M."/>
            <person name="Laudet V."/>
            <person name="Schachter V."/>
            <person name="Quetier F."/>
            <person name="Saurin W."/>
            <person name="Scarpelli C."/>
            <person name="Wincker P."/>
            <person name="Lander E.S."/>
            <person name="Weissenbach J."/>
            <person name="Roest Crollius H."/>
        </authorList>
    </citation>
    <scope>NUCLEOTIDE SEQUENCE [LARGE SCALE GENOMIC DNA]</scope>
</reference>
<comment type="subcellular location">
    <subcellularLocation>
        <location evidence="4">Secreted</location>
    </subcellularLocation>
</comment>
<comment type="similarity">
    <text evidence="4">Belongs to the heparin-binding growth factors family.</text>
</comment>
<organism>
    <name type="scientific">Tetraodon nigroviridis</name>
    <name type="common">Spotted green pufferfish</name>
    <name type="synonym">Chelonodon nigroviridis</name>
    <dbReference type="NCBI Taxonomy" id="99883"/>
    <lineage>
        <taxon>Eukaryota</taxon>
        <taxon>Metazoa</taxon>
        <taxon>Chordata</taxon>
        <taxon>Craniata</taxon>
        <taxon>Vertebrata</taxon>
        <taxon>Euteleostomi</taxon>
        <taxon>Actinopterygii</taxon>
        <taxon>Neopterygii</taxon>
        <taxon>Teleostei</taxon>
        <taxon>Neoteleostei</taxon>
        <taxon>Acanthomorphata</taxon>
        <taxon>Eupercaria</taxon>
        <taxon>Tetraodontiformes</taxon>
        <taxon>Tetradontoidea</taxon>
        <taxon>Tetraodontidae</taxon>
        <taxon>Tetraodon</taxon>
    </lineage>
</organism>
<evidence type="ECO:0000250" key="1"/>
<evidence type="ECO:0000255" key="2"/>
<evidence type="ECO:0000256" key="3">
    <source>
        <dbReference type="SAM" id="MobiDB-lite"/>
    </source>
</evidence>
<evidence type="ECO:0000305" key="4"/>
<feature type="signal peptide" evidence="2">
    <location>
        <begin position="1"/>
        <end position="23"/>
    </location>
</feature>
<feature type="chain" id="PRO_0000042927" description="Fibroblast growth factor 23">
    <location>
        <begin position="24"/>
        <end position="263"/>
    </location>
</feature>
<feature type="region of interest" description="Disordered" evidence="3">
    <location>
        <begin position="198"/>
        <end position="263"/>
    </location>
</feature>
<feature type="compositionally biased region" description="Basic and acidic residues" evidence="3">
    <location>
        <begin position="198"/>
        <end position="211"/>
    </location>
</feature>
<feature type="compositionally biased region" description="Acidic residues" evidence="3">
    <location>
        <begin position="212"/>
        <end position="226"/>
    </location>
</feature>
<feature type="compositionally biased region" description="Basic and acidic residues" evidence="3">
    <location>
        <begin position="227"/>
        <end position="245"/>
    </location>
</feature>
<feature type="compositionally biased region" description="Polar residues" evidence="3">
    <location>
        <begin position="249"/>
        <end position="263"/>
    </location>
</feature>
<feature type="glycosylation site" description="N-linked (GlcNAc...) asparagine" evidence="2">
    <location>
        <position position="124"/>
    </location>
</feature>
<feature type="glycosylation site" description="N-linked (GlcNAc...) asparagine" evidence="2">
    <location>
        <position position="231"/>
    </location>
</feature>
<feature type="disulfide bond" evidence="1">
    <location>
        <begin position="103"/>
        <end position="121"/>
    </location>
</feature>
<sequence length="263" mass="29109">MDVNRRIGVKDALLALLLALLQGCPLGETAPNASPLVGSNWGNPRRYVHLQTSTDMSNFYLEIRLDGTVRKSTARTSYSVILLKADTRERIAILGVKSNRYLCMDLEGSPFSSPTCIRDDCLFNHSLLENNRDVYYSSRTGILFNLEGSRQVFVVGQNVPQTSLFLPRTNTVPLERLLLHRDKRNQVVDPSDPHRVAVGRAEEGSDSRALQEDDADLEVETEVEVGDDGRNASRERLQAPSDHDPWGVFSSNPGSPRSSGTVG</sequence>
<name>FGF23_TETNG</name>
<protein>
    <recommendedName>
        <fullName>Fibroblast growth factor 23</fullName>
        <shortName>FGF-23</shortName>
    </recommendedName>
</protein>
<proteinExistence type="evidence at transcript level"/>